<accession>Q1XDN6</accession>
<feature type="chain" id="PRO_0000277181" description="DNA-directed RNA polymerase subunit beta'">
    <location>
        <begin position="1"/>
        <end position="629"/>
    </location>
</feature>
<feature type="binding site" evidence="1">
    <location>
        <position position="70"/>
    </location>
    <ligand>
        <name>Zn(2+)</name>
        <dbReference type="ChEBI" id="CHEBI:29105"/>
    </ligand>
</feature>
<feature type="binding site" evidence="1">
    <location>
        <position position="72"/>
    </location>
    <ligand>
        <name>Zn(2+)</name>
        <dbReference type="ChEBI" id="CHEBI:29105"/>
    </ligand>
</feature>
<feature type="binding site" evidence="1">
    <location>
        <position position="85"/>
    </location>
    <ligand>
        <name>Zn(2+)</name>
        <dbReference type="ChEBI" id="CHEBI:29105"/>
    </ligand>
</feature>
<feature type="binding site" evidence="1">
    <location>
        <position position="88"/>
    </location>
    <ligand>
        <name>Zn(2+)</name>
        <dbReference type="ChEBI" id="CHEBI:29105"/>
    </ligand>
</feature>
<feature type="binding site" evidence="1">
    <location>
        <position position="472"/>
    </location>
    <ligand>
        <name>Mg(2+)</name>
        <dbReference type="ChEBI" id="CHEBI:18420"/>
    </ligand>
</feature>
<feature type="binding site" evidence="1">
    <location>
        <position position="474"/>
    </location>
    <ligand>
        <name>Mg(2+)</name>
        <dbReference type="ChEBI" id="CHEBI:18420"/>
    </ligand>
</feature>
<feature type="binding site" evidence="1">
    <location>
        <position position="476"/>
    </location>
    <ligand>
        <name>Mg(2+)</name>
        <dbReference type="ChEBI" id="CHEBI:18420"/>
    </ligand>
</feature>
<reference key="1">
    <citation type="submission" date="2003-11" db="EMBL/GenBank/DDBJ databases">
        <title>Whole genome sequence of Porphyra yezoensis chloroplast.</title>
        <authorList>
            <person name="Kunimoto M."/>
            <person name="Morishima K."/>
            <person name="Yoshikawa M."/>
            <person name="Fukuda S."/>
            <person name="Kobayashi T."/>
            <person name="Kobayashi M."/>
            <person name="Okazaki T."/>
            <person name="Ohara I."/>
            <person name="Nakayama I."/>
        </authorList>
    </citation>
    <scope>NUCLEOTIDE SEQUENCE [LARGE SCALE GENOMIC DNA]</scope>
    <source>
        <strain>U-51</strain>
    </source>
</reference>
<evidence type="ECO:0000255" key="1">
    <source>
        <dbReference type="HAMAP-Rule" id="MF_01323"/>
    </source>
</evidence>
<protein>
    <recommendedName>
        <fullName evidence="1">DNA-directed RNA polymerase subunit beta'</fullName>
        <ecNumber evidence="1">2.7.7.6</ecNumber>
    </recommendedName>
    <alternativeName>
        <fullName evidence="1">PEP</fullName>
    </alternativeName>
    <alternativeName>
        <fullName evidence="1">Plastid-encoded RNA polymerase subunit beta'</fullName>
        <shortName evidence="1">RNA polymerase subunit beta'</shortName>
    </alternativeName>
</protein>
<geneLocation type="chloroplast"/>
<keyword id="KW-0150">Chloroplast</keyword>
<keyword id="KW-0240">DNA-directed RNA polymerase</keyword>
<keyword id="KW-0460">Magnesium</keyword>
<keyword id="KW-0479">Metal-binding</keyword>
<keyword id="KW-0548">Nucleotidyltransferase</keyword>
<keyword id="KW-0934">Plastid</keyword>
<keyword id="KW-0804">Transcription</keyword>
<keyword id="KW-0808">Transferase</keyword>
<keyword id="KW-0862">Zinc</keyword>
<sequence>MTKFEQYFDYVKISLASPEKIRQWGERSLPNGQIVGEITKPETINYRTLKPEMDGLFCEKIFGPVKDWECHCGKYKRFRYKGIVCERCGVEVTESRVRRHRMAYIELASPVTHVWYLKGSTSYIALALDLKVKEVEKIVYFHSYVVTQSNTDINLKYKQLLEGYEWKSLEEEIYQNQDENNQVEVGIGAEAIQKLLKDLDLEHIAETLRSEATNPPKSFKTPSLKFNKKMKRLRLIENFIATGADPSWMVFTVIPVIPPDLRPMVQLDGGRFATADLNEFYRRIINRNNRLSRLKSILAPEIIIRNEKRMLQEAVDSLMDNGRRGRTVVGANNRPLKSLSDIIEGKQGRFRQNLLGKRVDYSGRSVIVVGPHLKLHQCGLPREMALELFQPFVIHRLILQGLVNNIKAAKKMIQKNESSIWNVLNEVIQGHPVLLNRAPTLHRLGIQAFEPILVEGRAIKLHPLVCPAFNADFDGDQMAVHVPLSLEAQAEARLLMLAPHNFLSPATGQPIIMPSQDMVLGCYYLTANNPSQQQGSNQYFASLEDVVMAYEQKKIDLHSYIWARFDGLVDGDQPHDPIKIEKHSDNSTTKFFNNHIIKEDAENQRIVQYIRTTAGRIIFNKIIQESLLA</sequence>
<gene>
    <name evidence="1" type="primary">rpoC1</name>
</gene>
<proteinExistence type="inferred from homology"/>
<organism>
    <name type="scientific">Pyropia yezoensis</name>
    <name type="common">Susabi-nori</name>
    <name type="synonym">Porphyra yezoensis</name>
    <dbReference type="NCBI Taxonomy" id="2788"/>
    <lineage>
        <taxon>Eukaryota</taxon>
        <taxon>Rhodophyta</taxon>
        <taxon>Bangiophyceae</taxon>
        <taxon>Bangiales</taxon>
        <taxon>Bangiaceae</taxon>
        <taxon>Pyropia</taxon>
    </lineage>
</organism>
<comment type="function">
    <text evidence="1">DNA-dependent RNA polymerase catalyzes the transcription of DNA into RNA using the four ribonucleoside triphosphates as substrates.</text>
</comment>
<comment type="catalytic activity">
    <reaction evidence="1">
        <text>RNA(n) + a ribonucleoside 5'-triphosphate = RNA(n+1) + diphosphate</text>
        <dbReference type="Rhea" id="RHEA:21248"/>
        <dbReference type="Rhea" id="RHEA-COMP:14527"/>
        <dbReference type="Rhea" id="RHEA-COMP:17342"/>
        <dbReference type="ChEBI" id="CHEBI:33019"/>
        <dbReference type="ChEBI" id="CHEBI:61557"/>
        <dbReference type="ChEBI" id="CHEBI:140395"/>
        <dbReference type="EC" id="2.7.7.6"/>
    </reaction>
</comment>
<comment type="cofactor">
    <cofactor evidence="1">
        <name>Mg(2+)</name>
        <dbReference type="ChEBI" id="CHEBI:18420"/>
    </cofactor>
    <text evidence="1">Binds 1 Mg(2+) ion per subunit.</text>
</comment>
<comment type="cofactor">
    <cofactor evidence="1">
        <name>Zn(2+)</name>
        <dbReference type="ChEBI" id="CHEBI:29105"/>
    </cofactor>
    <text evidence="1">Binds 1 Zn(2+) ion per subunit.</text>
</comment>
<comment type="subunit">
    <text evidence="1">In plastids the minimal PEP RNA polymerase catalytic core is composed of four subunits: alpha, beta, beta', and beta''. When a (nuclear-encoded) sigma factor is associated with the core the holoenzyme is formed, which can initiate transcription.</text>
</comment>
<comment type="subcellular location">
    <subcellularLocation>
        <location evidence="1">Plastid</location>
        <location evidence="1">Chloroplast</location>
    </subcellularLocation>
</comment>
<comment type="similarity">
    <text evidence="1">Belongs to the RNA polymerase beta' chain family. RpoC1 subfamily.</text>
</comment>
<name>RPOC1_PYRYE</name>
<dbReference type="EC" id="2.7.7.6" evidence="1"/>
<dbReference type="EMBL" id="AP006715">
    <property type="protein sequence ID" value="BAE92375.1"/>
    <property type="molecule type" value="Genomic_DNA"/>
</dbReference>
<dbReference type="RefSeq" id="YP_536932.1">
    <property type="nucleotide sequence ID" value="NC_007932.1"/>
</dbReference>
<dbReference type="SMR" id="Q1XDN6"/>
<dbReference type="GeneID" id="3978930"/>
<dbReference type="GO" id="GO:0009507">
    <property type="term" value="C:chloroplast"/>
    <property type="evidence" value="ECO:0007669"/>
    <property type="project" value="UniProtKB-SubCell"/>
</dbReference>
<dbReference type="GO" id="GO:0000428">
    <property type="term" value="C:DNA-directed RNA polymerase complex"/>
    <property type="evidence" value="ECO:0007669"/>
    <property type="project" value="UniProtKB-KW"/>
</dbReference>
<dbReference type="GO" id="GO:0005739">
    <property type="term" value="C:mitochondrion"/>
    <property type="evidence" value="ECO:0007669"/>
    <property type="project" value="GOC"/>
</dbReference>
<dbReference type="GO" id="GO:0003677">
    <property type="term" value="F:DNA binding"/>
    <property type="evidence" value="ECO:0007669"/>
    <property type="project" value="UniProtKB-UniRule"/>
</dbReference>
<dbReference type="GO" id="GO:0003899">
    <property type="term" value="F:DNA-directed RNA polymerase activity"/>
    <property type="evidence" value="ECO:0007669"/>
    <property type="project" value="UniProtKB-UniRule"/>
</dbReference>
<dbReference type="GO" id="GO:0000287">
    <property type="term" value="F:magnesium ion binding"/>
    <property type="evidence" value="ECO:0007669"/>
    <property type="project" value="UniProtKB-UniRule"/>
</dbReference>
<dbReference type="GO" id="GO:0008270">
    <property type="term" value="F:zinc ion binding"/>
    <property type="evidence" value="ECO:0007669"/>
    <property type="project" value="UniProtKB-UniRule"/>
</dbReference>
<dbReference type="GO" id="GO:0006351">
    <property type="term" value="P:DNA-templated transcription"/>
    <property type="evidence" value="ECO:0007669"/>
    <property type="project" value="UniProtKB-UniRule"/>
</dbReference>
<dbReference type="Gene3D" id="1.10.40.90">
    <property type="match status" value="1"/>
</dbReference>
<dbReference type="Gene3D" id="2.40.40.20">
    <property type="match status" value="1"/>
</dbReference>
<dbReference type="Gene3D" id="4.10.860.120">
    <property type="entry name" value="RNA polymerase II, clamp domain"/>
    <property type="match status" value="1"/>
</dbReference>
<dbReference type="Gene3D" id="1.10.274.100">
    <property type="entry name" value="RNA polymerase Rpb1, domain 3"/>
    <property type="match status" value="1"/>
</dbReference>
<dbReference type="HAMAP" id="MF_01323">
    <property type="entry name" value="RNApol_bact_RpoC1"/>
    <property type="match status" value="1"/>
</dbReference>
<dbReference type="InterPro" id="IPR012755">
    <property type="entry name" value="DNA-dir_RpoC1_gamma"/>
</dbReference>
<dbReference type="InterPro" id="IPR045867">
    <property type="entry name" value="DNA-dir_RpoC_beta_prime"/>
</dbReference>
<dbReference type="InterPro" id="IPR000722">
    <property type="entry name" value="RNA_pol_asu"/>
</dbReference>
<dbReference type="InterPro" id="IPR006592">
    <property type="entry name" value="RNA_pol_N"/>
</dbReference>
<dbReference type="InterPro" id="IPR007080">
    <property type="entry name" value="RNA_pol_Rpb1_1"/>
</dbReference>
<dbReference type="InterPro" id="IPR007066">
    <property type="entry name" value="RNA_pol_Rpb1_3"/>
</dbReference>
<dbReference type="InterPro" id="IPR042102">
    <property type="entry name" value="RNA_pol_Rpb1_3_sf"/>
</dbReference>
<dbReference type="InterPro" id="IPR044893">
    <property type="entry name" value="RNA_pol_Rpb1_clamp_domain"/>
</dbReference>
<dbReference type="InterPro" id="IPR034678">
    <property type="entry name" value="RNApol_RpoC1"/>
</dbReference>
<dbReference type="NCBIfam" id="NF002729">
    <property type="entry name" value="PRK02625.1"/>
    <property type="match status" value="1"/>
</dbReference>
<dbReference type="NCBIfam" id="TIGR02387">
    <property type="entry name" value="rpoC1_cyan"/>
    <property type="match status" value="1"/>
</dbReference>
<dbReference type="PANTHER" id="PTHR19376">
    <property type="entry name" value="DNA-DIRECTED RNA POLYMERASE"/>
    <property type="match status" value="1"/>
</dbReference>
<dbReference type="PANTHER" id="PTHR19376:SF54">
    <property type="entry name" value="DNA-DIRECTED RNA POLYMERASE SUBUNIT BETA"/>
    <property type="match status" value="1"/>
</dbReference>
<dbReference type="Pfam" id="PF04997">
    <property type="entry name" value="RNA_pol_Rpb1_1"/>
    <property type="match status" value="1"/>
</dbReference>
<dbReference type="Pfam" id="PF00623">
    <property type="entry name" value="RNA_pol_Rpb1_2"/>
    <property type="match status" value="1"/>
</dbReference>
<dbReference type="Pfam" id="PF04983">
    <property type="entry name" value="RNA_pol_Rpb1_3"/>
    <property type="match status" value="1"/>
</dbReference>
<dbReference type="SMART" id="SM00663">
    <property type="entry name" value="RPOLA_N"/>
    <property type="match status" value="1"/>
</dbReference>
<dbReference type="SUPFAM" id="SSF64484">
    <property type="entry name" value="beta and beta-prime subunits of DNA dependent RNA-polymerase"/>
    <property type="match status" value="1"/>
</dbReference>